<evidence type="ECO:0000255" key="1">
    <source>
        <dbReference type="HAMAP-Rule" id="MF_01864"/>
    </source>
</evidence>
<evidence type="ECO:0000255" key="2">
    <source>
        <dbReference type="PROSITE-ProRule" id="PRU01266"/>
    </source>
</evidence>
<evidence type="ECO:0000305" key="3"/>
<proteinExistence type="inferred from homology"/>
<name>MIAB_CITK8</name>
<protein>
    <recommendedName>
        <fullName evidence="1">tRNA-2-methylthio-N(6)-dimethylallyladenosine synthase</fullName>
        <ecNumber evidence="1">2.8.4.3</ecNumber>
    </recommendedName>
    <alternativeName>
        <fullName evidence="1">(Dimethylallyl)adenosine tRNA methylthiotransferase MiaB</fullName>
    </alternativeName>
    <alternativeName>
        <fullName evidence="1">tRNA-i(6)A37 methylthiotransferase</fullName>
    </alternativeName>
</protein>
<comment type="function">
    <text evidence="1">Catalyzes the methylthiolation of N6-(dimethylallyl)adenosine (i(6)A), leading to the formation of 2-methylthio-N6-(dimethylallyl)adenosine (ms(2)i(6)A) at position 37 in tRNAs that read codons beginning with uridine.</text>
</comment>
<comment type="catalytic activity">
    <reaction evidence="1">
        <text>N(6)-dimethylallyladenosine(37) in tRNA + (sulfur carrier)-SH + AH2 + 2 S-adenosyl-L-methionine = 2-methylsulfanyl-N(6)-dimethylallyladenosine(37) in tRNA + (sulfur carrier)-H + 5'-deoxyadenosine + L-methionine + A + S-adenosyl-L-homocysteine + 2 H(+)</text>
        <dbReference type="Rhea" id="RHEA:37067"/>
        <dbReference type="Rhea" id="RHEA-COMP:10375"/>
        <dbReference type="Rhea" id="RHEA-COMP:10376"/>
        <dbReference type="Rhea" id="RHEA-COMP:14737"/>
        <dbReference type="Rhea" id="RHEA-COMP:14739"/>
        <dbReference type="ChEBI" id="CHEBI:13193"/>
        <dbReference type="ChEBI" id="CHEBI:15378"/>
        <dbReference type="ChEBI" id="CHEBI:17319"/>
        <dbReference type="ChEBI" id="CHEBI:17499"/>
        <dbReference type="ChEBI" id="CHEBI:29917"/>
        <dbReference type="ChEBI" id="CHEBI:57844"/>
        <dbReference type="ChEBI" id="CHEBI:57856"/>
        <dbReference type="ChEBI" id="CHEBI:59789"/>
        <dbReference type="ChEBI" id="CHEBI:64428"/>
        <dbReference type="ChEBI" id="CHEBI:74415"/>
        <dbReference type="ChEBI" id="CHEBI:74417"/>
        <dbReference type="EC" id="2.8.4.3"/>
    </reaction>
</comment>
<comment type="cofactor">
    <cofactor evidence="1">
        <name>[4Fe-4S] cluster</name>
        <dbReference type="ChEBI" id="CHEBI:49883"/>
    </cofactor>
    <text evidence="1">Binds 2 [4Fe-4S] clusters. One cluster is coordinated with 3 cysteines and an exchangeable S-adenosyl-L-methionine.</text>
</comment>
<comment type="subunit">
    <text evidence="1">Monomer.</text>
</comment>
<comment type="subcellular location">
    <subcellularLocation>
        <location evidence="1">Cytoplasm</location>
    </subcellularLocation>
</comment>
<comment type="similarity">
    <text evidence="1">Belongs to the methylthiotransferase family. MiaB subfamily.</text>
</comment>
<comment type="sequence caution" evidence="3">
    <conflict type="erroneous initiation">
        <sequence resource="EMBL-CDS" id="ABV13612"/>
    </conflict>
</comment>
<reference key="1">
    <citation type="submission" date="2007-08" db="EMBL/GenBank/DDBJ databases">
        <authorList>
            <consortium name="The Citrobacter koseri Genome Sequencing Project"/>
            <person name="McClelland M."/>
            <person name="Sanderson E.K."/>
            <person name="Porwollik S."/>
            <person name="Spieth J."/>
            <person name="Clifton W.S."/>
            <person name="Latreille P."/>
            <person name="Courtney L."/>
            <person name="Wang C."/>
            <person name="Pepin K."/>
            <person name="Bhonagiri V."/>
            <person name="Nash W."/>
            <person name="Johnson M."/>
            <person name="Thiruvilangam P."/>
            <person name="Wilson R."/>
        </authorList>
    </citation>
    <scope>NUCLEOTIDE SEQUENCE [LARGE SCALE GENOMIC DNA]</scope>
    <source>
        <strain>ATCC BAA-895 / CDC 4225-83 / SGSC4696</strain>
    </source>
</reference>
<dbReference type="EC" id="2.8.4.3" evidence="1"/>
<dbReference type="EMBL" id="CP000822">
    <property type="protein sequence ID" value="ABV13612.1"/>
    <property type="status" value="ALT_INIT"/>
    <property type="molecule type" value="Genomic_DNA"/>
</dbReference>
<dbReference type="RefSeq" id="WP_024130541.1">
    <property type="nucleotide sequence ID" value="NC_009792.1"/>
</dbReference>
<dbReference type="SMR" id="A8AJE9"/>
<dbReference type="STRING" id="290338.CKO_02502"/>
<dbReference type="GeneID" id="45136380"/>
<dbReference type="KEGG" id="cko:CKO_02502"/>
<dbReference type="HOGENOM" id="CLU_018697_2_0_6"/>
<dbReference type="OrthoDB" id="9805215at2"/>
<dbReference type="Proteomes" id="UP000008148">
    <property type="component" value="Chromosome"/>
</dbReference>
<dbReference type="GO" id="GO:0005829">
    <property type="term" value="C:cytosol"/>
    <property type="evidence" value="ECO:0007669"/>
    <property type="project" value="TreeGrafter"/>
</dbReference>
<dbReference type="GO" id="GO:0051539">
    <property type="term" value="F:4 iron, 4 sulfur cluster binding"/>
    <property type="evidence" value="ECO:0007669"/>
    <property type="project" value="UniProtKB-UniRule"/>
</dbReference>
<dbReference type="GO" id="GO:0046872">
    <property type="term" value="F:metal ion binding"/>
    <property type="evidence" value="ECO:0007669"/>
    <property type="project" value="UniProtKB-KW"/>
</dbReference>
<dbReference type="GO" id="GO:0035597">
    <property type="term" value="F:N6-isopentenyladenosine methylthiotransferase activity"/>
    <property type="evidence" value="ECO:0007669"/>
    <property type="project" value="TreeGrafter"/>
</dbReference>
<dbReference type="CDD" id="cd01335">
    <property type="entry name" value="Radical_SAM"/>
    <property type="match status" value="1"/>
</dbReference>
<dbReference type="FunFam" id="3.40.50.12160:FF:000001">
    <property type="entry name" value="tRNA-2-methylthio-N(6)-dimethylallyladenosine synthase"/>
    <property type="match status" value="1"/>
</dbReference>
<dbReference type="FunFam" id="3.80.30.20:FF:000001">
    <property type="entry name" value="tRNA-2-methylthio-N(6)-dimethylallyladenosine synthase 2"/>
    <property type="match status" value="1"/>
</dbReference>
<dbReference type="Gene3D" id="3.40.50.12160">
    <property type="entry name" value="Methylthiotransferase, N-terminal domain"/>
    <property type="match status" value="1"/>
</dbReference>
<dbReference type="Gene3D" id="3.80.30.20">
    <property type="entry name" value="tm_1862 like domain"/>
    <property type="match status" value="1"/>
</dbReference>
<dbReference type="HAMAP" id="MF_01864">
    <property type="entry name" value="tRNA_metthiotr_MiaB"/>
    <property type="match status" value="1"/>
</dbReference>
<dbReference type="InterPro" id="IPR006638">
    <property type="entry name" value="Elp3/MiaA/NifB-like_rSAM"/>
</dbReference>
<dbReference type="InterPro" id="IPR005839">
    <property type="entry name" value="Methylthiotransferase"/>
</dbReference>
<dbReference type="InterPro" id="IPR020612">
    <property type="entry name" value="Methylthiotransferase_CS"/>
</dbReference>
<dbReference type="InterPro" id="IPR013848">
    <property type="entry name" value="Methylthiotransferase_N"/>
</dbReference>
<dbReference type="InterPro" id="IPR038135">
    <property type="entry name" value="Methylthiotransferase_N_sf"/>
</dbReference>
<dbReference type="InterPro" id="IPR006463">
    <property type="entry name" value="MiaB_methiolase"/>
</dbReference>
<dbReference type="InterPro" id="IPR007197">
    <property type="entry name" value="rSAM"/>
</dbReference>
<dbReference type="InterPro" id="IPR023404">
    <property type="entry name" value="rSAM_horseshoe"/>
</dbReference>
<dbReference type="InterPro" id="IPR002792">
    <property type="entry name" value="TRAM_dom"/>
</dbReference>
<dbReference type="NCBIfam" id="TIGR01574">
    <property type="entry name" value="miaB-methiolase"/>
    <property type="match status" value="1"/>
</dbReference>
<dbReference type="NCBIfam" id="TIGR00089">
    <property type="entry name" value="MiaB/RimO family radical SAM methylthiotransferase"/>
    <property type="match status" value="1"/>
</dbReference>
<dbReference type="PANTHER" id="PTHR43020">
    <property type="entry name" value="CDK5 REGULATORY SUBUNIT-ASSOCIATED PROTEIN 1"/>
    <property type="match status" value="1"/>
</dbReference>
<dbReference type="PANTHER" id="PTHR43020:SF2">
    <property type="entry name" value="MITOCHONDRIAL TRNA METHYLTHIOTRANSFERASE CDK5RAP1"/>
    <property type="match status" value="1"/>
</dbReference>
<dbReference type="Pfam" id="PF04055">
    <property type="entry name" value="Radical_SAM"/>
    <property type="match status" value="1"/>
</dbReference>
<dbReference type="Pfam" id="PF01938">
    <property type="entry name" value="TRAM"/>
    <property type="match status" value="1"/>
</dbReference>
<dbReference type="Pfam" id="PF00919">
    <property type="entry name" value="UPF0004"/>
    <property type="match status" value="1"/>
</dbReference>
<dbReference type="SFLD" id="SFLDF00273">
    <property type="entry name" value="(dimethylallyl)adenosine_tRNA"/>
    <property type="match status" value="1"/>
</dbReference>
<dbReference type="SFLD" id="SFLDG01082">
    <property type="entry name" value="B12-binding_domain_containing"/>
    <property type="match status" value="1"/>
</dbReference>
<dbReference type="SFLD" id="SFLDG01061">
    <property type="entry name" value="methylthiotransferase"/>
    <property type="match status" value="1"/>
</dbReference>
<dbReference type="SMART" id="SM00729">
    <property type="entry name" value="Elp3"/>
    <property type="match status" value="1"/>
</dbReference>
<dbReference type="SUPFAM" id="SSF102114">
    <property type="entry name" value="Radical SAM enzymes"/>
    <property type="match status" value="1"/>
</dbReference>
<dbReference type="PROSITE" id="PS51449">
    <property type="entry name" value="MTTASE_N"/>
    <property type="match status" value="1"/>
</dbReference>
<dbReference type="PROSITE" id="PS01278">
    <property type="entry name" value="MTTASE_RADICAL"/>
    <property type="match status" value="1"/>
</dbReference>
<dbReference type="PROSITE" id="PS51918">
    <property type="entry name" value="RADICAL_SAM"/>
    <property type="match status" value="1"/>
</dbReference>
<dbReference type="PROSITE" id="PS50926">
    <property type="entry name" value="TRAM"/>
    <property type="match status" value="1"/>
</dbReference>
<gene>
    <name evidence="1" type="primary">miaB</name>
    <name type="ordered locus">CKO_02502</name>
</gene>
<accession>A8AJE9</accession>
<keyword id="KW-0004">4Fe-4S</keyword>
<keyword id="KW-0963">Cytoplasm</keyword>
<keyword id="KW-0408">Iron</keyword>
<keyword id="KW-0411">Iron-sulfur</keyword>
<keyword id="KW-0479">Metal-binding</keyword>
<keyword id="KW-1185">Reference proteome</keyword>
<keyword id="KW-0949">S-adenosyl-L-methionine</keyword>
<keyword id="KW-0808">Transferase</keyword>
<keyword id="KW-0819">tRNA processing</keyword>
<sequence>MTKKLHIKTWGCQMNEYDSSKMADLLDATHGYQLTEVAEEADVLLLNTCSIREKAQEKVFHQLGRWKLLKEKNPDLIIGVGGCVASQEGDHIRQRAHYVDIIFGPQTLHRLPEMINSVRGDRSPVVDISFPEIEKFDRLPEPRAEGPTAFVSIMEGCNKYCTYCVVPYTRGEEVSRPSDDILFEIAQLAAQGVREVNLLGQNVNAWRGENYDGTTGSFADLLRLVAAIDGIDRIRFTTSHPIEFTDDIIEVYRDTPELVSFLHLPVQSGADRVLNLMGRTHTALEYKAIIRKLRAARPDIQISSDFIVGFPGETTQDFEQTMKLIADVNFDMSYSFIFSARPGTPAADMVDDVPEEEKKQRLYILQERINQQAMAWSRRMLGTVQRILVEGTSRKSIMELSGRTENNRVVNFEGTPEMIGKFVDVEITDVYTNSLRGKVVRTEDEMGLRVAETPESVIARTRKENEIGVGFYQP</sequence>
<feature type="chain" id="PRO_0000374216" description="tRNA-2-methylthio-N(6)-dimethylallyladenosine synthase">
    <location>
        <begin position="1"/>
        <end position="474"/>
    </location>
</feature>
<feature type="domain" description="MTTase N-terminal" evidence="1">
    <location>
        <begin position="3"/>
        <end position="120"/>
    </location>
</feature>
<feature type="domain" description="Radical SAM core" evidence="2">
    <location>
        <begin position="143"/>
        <end position="375"/>
    </location>
</feature>
<feature type="domain" description="TRAM" evidence="1">
    <location>
        <begin position="378"/>
        <end position="441"/>
    </location>
</feature>
<feature type="binding site" evidence="1">
    <location>
        <position position="12"/>
    </location>
    <ligand>
        <name>[4Fe-4S] cluster</name>
        <dbReference type="ChEBI" id="CHEBI:49883"/>
        <label>1</label>
    </ligand>
</feature>
<feature type="binding site" evidence="1">
    <location>
        <position position="49"/>
    </location>
    <ligand>
        <name>[4Fe-4S] cluster</name>
        <dbReference type="ChEBI" id="CHEBI:49883"/>
        <label>1</label>
    </ligand>
</feature>
<feature type="binding site" evidence="1">
    <location>
        <position position="83"/>
    </location>
    <ligand>
        <name>[4Fe-4S] cluster</name>
        <dbReference type="ChEBI" id="CHEBI:49883"/>
        <label>1</label>
    </ligand>
</feature>
<feature type="binding site" evidence="1">
    <location>
        <position position="157"/>
    </location>
    <ligand>
        <name>[4Fe-4S] cluster</name>
        <dbReference type="ChEBI" id="CHEBI:49883"/>
        <label>2</label>
        <note>4Fe-4S-S-AdoMet</note>
    </ligand>
</feature>
<feature type="binding site" evidence="1">
    <location>
        <position position="161"/>
    </location>
    <ligand>
        <name>[4Fe-4S] cluster</name>
        <dbReference type="ChEBI" id="CHEBI:49883"/>
        <label>2</label>
        <note>4Fe-4S-S-AdoMet</note>
    </ligand>
</feature>
<feature type="binding site" evidence="1">
    <location>
        <position position="164"/>
    </location>
    <ligand>
        <name>[4Fe-4S] cluster</name>
        <dbReference type="ChEBI" id="CHEBI:49883"/>
        <label>2</label>
        <note>4Fe-4S-S-AdoMet</note>
    </ligand>
</feature>
<organism>
    <name type="scientific">Citrobacter koseri (strain ATCC BAA-895 / CDC 4225-83 / SGSC4696)</name>
    <dbReference type="NCBI Taxonomy" id="290338"/>
    <lineage>
        <taxon>Bacteria</taxon>
        <taxon>Pseudomonadati</taxon>
        <taxon>Pseudomonadota</taxon>
        <taxon>Gammaproteobacteria</taxon>
        <taxon>Enterobacterales</taxon>
        <taxon>Enterobacteriaceae</taxon>
        <taxon>Citrobacter</taxon>
    </lineage>
</organism>